<feature type="chain" id="PRO_0000388511" description="Sulfite reductase [NADPH] hemoprotein beta-component 2">
    <location>
        <begin position="1"/>
        <end position="577"/>
    </location>
</feature>
<feature type="binding site" evidence="1">
    <location>
        <position position="441"/>
    </location>
    <ligand>
        <name>[4Fe-4S] cluster</name>
        <dbReference type="ChEBI" id="CHEBI:49883"/>
    </ligand>
</feature>
<feature type="binding site" evidence="1">
    <location>
        <position position="447"/>
    </location>
    <ligand>
        <name>[4Fe-4S] cluster</name>
        <dbReference type="ChEBI" id="CHEBI:49883"/>
    </ligand>
</feature>
<feature type="binding site" evidence="1">
    <location>
        <position position="486"/>
    </location>
    <ligand>
        <name>[4Fe-4S] cluster</name>
        <dbReference type="ChEBI" id="CHEBI:49883"/>
    </ligand>
</feature>
<feature type="binding site" evidence="1">
    <location>
        <position position="490"/>
    </location>
    <ligand>
        <name>[4Fe-4S] cluster</name>
        <dbReference type="ChEBI" id="CHEBI:49883"/>
    </ligand>
</feature>
<feature type="binding site" description="axial binding residue" evidence="1">
    <location>
        <position position="490"/>
    </location>
    <ligand>
        <name>siroheme</name>
        <dbReference type="ChEBI" id="CHEBI:60052"/>
    </ligand>
    <ligandPart>
        <name>Fe</name>
        <dbReference type="ChEBI" id="CHEBI:18248"/>
    </ligandPart>
</feature>
<keyword id="KW-0004">4Fe-4S</keyword>
<keyword id="KW-0028">Amino-acid biosynthesis</keyword>
<keyword id="KW-0198">Cysteine biosynthesis</keyword>
<keyword id="KW-0349">Heme</keyword>
<keyword id="KW-0408">Iron</keyword>
<keyword id="KW-0411">Iron-sulfur</keyword>
<keyword id="KW-0479">Metal-binding</keyword>
<keyword id="KW-0521">NADP</keyword>
<keyword id="KW-0560">Oxidoreductase</keyword>
<sequence>MSEKYVFSEKHPGPLVVEGKLTDAERMKTESNFLRGTIAEDLNDGLTGGFKGDNFLLIRFHGMYQQDDRDIRAERAEQKLEPRHAMLLRCRLPGGVMTPEQWLRIDKFAGESTIYGSIRITNRQTFQYHGILKSNVKPVHQMLNSIGLDALATANDMNRNVLCTSNPIESELHQQAYEWAKKISEHLLPRTRAYAEIWMDQEKVATTDEEPILGSTYLPRKFKTTVVVPPQNDVDLHANDLNFIAIADNGRLVGFNVLVGGGLSIAHGDKATYPRTASELGYISIEHTLAIAEAVVTTQRDWGNRTNRKNAKTKYTLERVGVDNFKQEVEARAGVKFEAVRPYEFTGRGDRIGWVKGIDNKWHLTLFIENGRILDYPGRPLKTGLAEIAKIHKGDFRLTANQNLIIAGVPARSKAKIDALAREHGLIDDSVSEQRKNSMACVSFPTCPLAMAEAERFLPEFVTKVEDIMQQHGVGDEHIVLRVTGCPNGCGRAMLAEIGLVGKAVGRYNLHLGGNREGTRIPRMYRENINETEILAEIDRLIGLWAQDRQPNEGFGDFTIRTNIIRPVLDPARDFYD</sequence>
<organism>
    <name type="scientific">Pectobacterium carotovorum subsp. carotovorum (strain PC1)</name>
    <dbReference type="NCBI Taxonomy" id="561230"/>
    <lineage>
        <taxon>Bacteria</taxon>
        <taxon>Pseudomonadati</taxon>
        <taxon>Pseudomonadota</taxon>
        <taxon>Gammaproteobacteria</taxon>
        <taxon>Enterobacterales</taxon>
        <taxon>Pectobacteriaceae</taxon>
        <taxon>Pectobacterium</taxon>
    </lineage>
</organism>
<accession>C6DDH3</accession>
<dbReference type="EC" id="1.8.1.2" evidence="1"/>
<dbReference type="EMBL" id="CP001657">
    <property type="protein sequence ID" value="ACT14380.1"/>
    <property type="molecule type" value="Genomic_DNA"/>
</dbReference>
<dbReference type="SMR" id="C6DDH3"/>
<dbReference type="STRING" id="561230.PC1_3364"/>
<dbReference type="KEGG" id="pct:PC1_3364"/>
<dbReference type="eggNOG" id="COG0155">
    <property type="taxonomic scope" value="Bacteria"/>
</dbReference>
<dbReference type="HOGENOM" id="CLU_001975_3_2_6"/>
<dbReference type="OrthoDB" id="3189055at2"/>
<dbReference type="UniPathway" id="UPA00140">
    <property type="reaction ID" value="UER00207"/>
</dbReference>
<dbReference type="Proteomes" id="UP000002736">
    <property type="component" value="Chromosome"/>
</dbReference>
<dbReference type="GO" id="GO:0009337">
    <property type="term" value="C:sulfite reductase complex (NADPH)"/>
    <property type="evidence" value="ECO:0007669"/>
    <property type="project" value="InterPro"/>
</dbReference>
<dbReference type="GO" id="GO:0051539">
    <property type="term" value="F:4 iron, 4 sulfur cluster binding"/>
    <property type="evidence" value="ECO:0007669"/>
    <property type="project" value="UniProtKB-KW"/>
</dbReference>
<dbReference type="GO" id="GO:0020037">
    <property type="term" value="F:heme binding"/>
    <property type="evidence" value="ECO:0007669"/>
    <property type="project" value="InterPro"/>
</dbReference>
<dbReference type="GO" id="GO:0046872">
    <property type="term" value="F:metal ion binding"/>
    <property type="evidence" value="ECO:0007669"/>
    <property type="project" value="UniProtKB-KW"/>
</dbReference>
<dbReference type="GO" id="GO:0050661">
    <property type="term" value="F:NADP binding"/>
    <property type="evidence" value="ECO:0007669"/>
    <property type="project" value="InterPro"/>
</dbReference>
<dbReference type="GO" id="GO:0050311">
    <property type="term" value="F:sulfite reductase (ferredoxin) activity"/>
    <property type="evidence" value="ECO:0007669"/>
    <property type="project" value="TreeGrafter"/>
</dbReference>
<dbReference type="GO" id="GO:0004783">
    <property type="term" value="F:sulfite reductase (NADPH) activity"/>
    <property type="evidence" value="ECO:0007669"/>
    <property type="project" value="UniProtKB-UniRule"/>
</dbReference>
<dbReference type="GO" id="GO:0019344">
    <property type="term" value="P:cysteine biosynthetic process"/>
    <property type="evidence" value="ECO:0007669"/>
    <property type="project" value="UniProtKB-KW"/>
</dbReference>
<dbReference type="GO" id="GO:0070814">
    <property type="term" value="P:hydrogen sulfide biosynthetic process"/>
    <property type="evidence" value="ECO:0007669"/>
    <property type="project" value="UniProtKB-UniRule"/>
</dbReference>
<dbReference type="GO" id="GO:0000103">
    <property type="term" value="P:sulfate assimilation"/>
    <property type="evidence" value="ECO:0007669"/>
    <property type="project" value="UniProtKB-UniRule"/>
</dbReference>
<dbReference type="FunFam" id="3.30.413.10:FF:000003">
    <property type="entry name" value="Sulfite reductase [NADPH] hemoprotein beta-component"/>
    <property type="match status" value="1"/>
</dbReference>
<dbReference type="FunFam" id="3.30.413.10:FF:000004">
    <property type="entry name" value="Sulfite reductase [NADPH] hemoprotein beta-component"/>
    <property type="match status" value="1"/>
</dbReference>
<dbReference type="Gene3D" id="3.30.413.10">
    <property type="entry name" value="Sulfite Reductase Hemoprotein, domain 1"/>
    <property type="match status" value="2"/>
</dbReference>
<dbReference type="HAMAP" id="MF_01540">
    <property type="entry name" value="CysI"/>
    <property type="match status" value="1"/>
</dbReference>
<dbReference type="InterPro" id="IPR011786">
    <property type="entry name" value="CysI"/>
</dbReference>
<dbReference type="InterPro" id="IPR005117">
    <property type="entry name" value="NiRdtase/SiRdtase_haem-b_fer"/>
</dbReference>
<dbReference type="InterPro" id="IPR036136">
    <property type="entry name" value="Nit/Sulf_reduc_fer-like_dom_sf"/>
</dbReference>
<dbReference type="InterPro" id="IPR006067">
    <property type="entry name" value="NO2/SO3_Rdtase_4Fe4S_dom"/>
</dbReference>
<dbReference type="InterPro" id="IPR045169">
    <property type="entry name" value="NO2/SO3_Rdtase_4Fe4S_prot"/>
</dbReference>
<dbReference type="InterPro" id="IPR045854">
    <property type="entry name" value="NO2/SO3_Rdtase_4Fe4S_sf"/>
</dbReference>
<dbReference type="InterPro" id="IPR006066">
    <property type="entry name" value="NO2/SO3_Rdtase_FeS/sirohaem_BS"/>
</dbReference>
<dbReference type="NCBIfam" id="TIGR02041">
    <property type="entry name" value="CysI"/>
    <property type="match status" value="1"/>
</dbReference>
<dbReference type="NCBIfam" id="NF010029">
    <property type="entry name" value="PRK13504.1"/>
    <property type="match status" value="1"/>
</dbReference>
<dbReference type="PANTHER" id="PTHR11493:SF47">
    <property type="entry name" value="SULFITE REDUCTASE [NADPH] SUBUNIT BETA"/>
    <property type="match status" value="1"/>
</dbReference>
<dbReference type="PANTHER" id="PTHR11493">
    <property type="entry name" value="SULFITE REDUCTASE [NADPH] SUBUNIT BETA-RELATED"/>
    <property type="match status" value="1"/>
</dbReference>
<dbReference type="Pfam" id="PF01077">
    <property type="entry name" value="NIR_SIR"/>
    <property type="match status" value="1"/>
</dbReference>
<dbReference type="Pfam" id="PF03460">
    <property type="entry name" value="NIR_SIR_ferr"/>
    <property type="match status" value="2"/>
</dbReference>
<dbReference type="PRINTS" id="PR00397">
    <property type="entry name" value="SIROHAEM"/>
</dbReference>
<dbReference type="SUPFAM" id="SSF56014">
    <property type="entry name" value="Nitrite and sulphite reductase 4Fe-4S domain-like"/>
    <property type="match status" value="2"/>
</dbReference>
<dbReference type="SUPFAM" id="SSF55124">
    <property type="entry name" value="Nitrite/Sulfite reductase N-terminal domain-like"/>
    <property type="match status" value="2"/>
</dbReference>
<dbReference type="PROSITE" id="PS00365">
    <property type="entry name" value="NIR_SIR"/>
    <property type="match status" value="1"/>
</dbReference>
<proteinExistence type="inferred from homology"/>
<reference key="1">
    <citation type="submission" date="2009-07" db="EMBL/GenBank/DDBJ databases">
        <title>Complete sequence of Pectobacterium carotovorum subsp. carotovorum PC1.</title>
        <authorList>
            <consortium name="US DOE Joint Genome Institute"/>
            <person name="Lucas S."/>
            <person name="Copeland A."/>
            <person name="Lapidus A."/>
            <person name="Glavina del Rio T."/>
            <person name="Tice H."/>
            <person name="Bruce D."/>
            <person name="Goodwin L."/>
            <person name="Pitluck S."/>
            <person name="Munk A.C."/>
            <person name="Brettin T."/>
            <person name="Detter J.C."/>
            <person name="Han C."/>
            <person name="Tapia R."/>
            <person name="Larimer F."/>
            <person name="Land M."/>
            <person name="Hauser L."/>
            <person name="Kyrpides N."/>
            <person name="Mikhailova N."/>
            <person name="Balakrishnan V."/>
            <person name="Glasner J."/>
            <person name="Perna N.T."/>
        </authorList>
    </citation>
    <scope>NUCLEOTIDE SEQUENCE [LARGE SCALE GENOMIC DNA]</scope>
    <source>
        <strain>PC1</strain>
    </source>
</reference>
<protein>
    <recommendedName>
        <fullName evidence="1">Sulfite reductase [NADPH] hemoprotein beta-component 2</fullName>
        <shortName evidence="1">SiR-HP 2</shortName>
        <shortName evidence="1">SiRHP 2</shortName>
        <ecNumber evidence="1">1.8.1.2</ecNumber>
    </recommendedName>
</protein>
<name>CYSI2_PECCP</name>
<evidence type="ECO:0000255" key="1">
    <source>
        <dbReference type="HAMAP-Rule" id="MF_01540"/>
    </source>
</evidence>
<comment type="function">
    <text evidence="1">Component of the sulfite reductase complex that catalyzes the 6-electron reduction of sulfite to sulfide. This is one of several activities required for the biosynthesis of L-cysteine from sulfate.</text>
</comment>
<comment type="catalytic activity">
    <reaction evidence="1">
        <text>hydrogen sulfide + 3 NADP(+) + 3 H2O = sulfite + 3 NADPH + 4 H(+)</text>
        <dbReference type="Rhea" id="RHEA:13801"/>
        <dbReference type="ChEBI" id="CHEBI:15377"/>
        <dbReference type="ChEBI" id="CHEBI:15378"/>
        <dbReference type="ChEBI" id="CHEBI:17359"/>
        <dbReference type="ChEBI" id="CHEBI:29919"/>
        <dbReference type="ChEBI" id="CHEBI:57783"/>
        <dbReference type="ChEBI" id="CHEBI:58349"/>
        <dbReference type="EC" id="1.8.1.2"/>
    </reaction>
</comment>
<comment type="cofactor">
    <cofactor evidence="1">
        <name>siroheme</name>
        <dbReference type="ChEBI" id="CHEBI:60052"/>
    </cofactor>
    <text evidence="1">Binds 1 siroheme per subunit.</text>
</comment>
<comment type="cofactor">
    <cofactor evidence="1">
        <name>[4Fe-4S] cluster</name>
        <dbReference type="ChEBI" id="CHEBI:49883"/>
    </cofactor>
    <text evidence="1">Binds 1 [4Fe-4S] cluster per subunit.</text>
</comment>
<comment type="pathway">
    <text evidence="1">Sulfur metabolism; hydrogen sulfide biosynthesis; hydrogen sulfide from sulfite (NADPH route): step 1/1.</text>
</comment>
<comment type="subunit">
    <text evidence="1">Alpha(8)-beta(8). The alpha component is a flavoprotein, the beta component is a hemoprotein.</text>
</comment>
<comment type="similarity">
    <text evidence="1">Belongs to the nitrite and sulfite reductase 4Fe-4S domain family.</text>
</comment>
<gene>
    <name evidence="1" type="primary">cysI2</name>
    <name type="ordered locus">PC1_3364</name>
</gene>